<organism>
    <name type="scientific">Saccharomyces cerevisiae (strain ATCC 204508 / S288c)</name>
    <name type="common">Baker's yeast</name>
    <dbReference type="NCBI Taxonomy" id="559292"/>
    <lineage>
        <taxon>Eukaryota</taxon>
        <taxon>Fungi</taxon>
        <taxon>Dikarya</taxon>
        <taxon>Ascomycota</taxon>
        <taxon>Saccharomycotina</taxon>
        <taxon>Saccharomycetes</taxon>
        <taxon>Saccharomycetales</taxon>
        <taxon>Saccharomycetaceae</taxon>
        <taxon>Saccharomyces</taxon>
    </lineage>
</organism>
<keyword id="KW-0963">Cytoplasm</keyword>
<keyword id="KW-1185">Reference proteome</keyword>
<keyword id="KW-0688">Ribosomal frameshifting</keyword>
<keyword id="KW-0694">RNA-binding</keyword>
<keyword id="KW-0814">Transposable element</keyword>
<comment type="function">
    <text evidence="1">Capsid protein (CA) is the structural component of the virus-like particle (VLP), forming the shell that encapsulates the retrotransposons dimeric RNA genome. The particles are assembled from trimer-clustered units and there are holes in the capsid shells that allow for the diffusion of macromolecules. CA also has nucleocapsid-like chaperone activity, promoting primer tRNA(i)-Met annealing to the multipartite primer-binding site (PBS), dimerization of Ty2 RNA and initiation of reverse transcription (By similarity).</text>
</comment>
<comment type="subunit">
    <text evidence="1">Homotrimer.</text>
</comment>
<comment type="subcellular location">
    <subcellularLocation>
        <location evidence="1">Cytoplasm</location>
    </subcellularLocation>
</comment>
<comment type="alternative products">
    <event type="ribosomal frameshifting"/>
    <isoform>
        <id>P0CX62-1</id>
        <name>Transposon Ty2-GR2 Gag polyprotein</name>
        <sequence type="displayed"/>
    </isoform>
    <isoform>
        <id>P0CX64-1</id>
        <name>Transposon Ty2-GR2 Gag-Pol polyprotein</name>
        <sequence type="external"/>
    </isoform>
    <text>The Gag-Pol polyprotein is generated by a +1 ribosomal frameshift.</text>
</comment>
<comment type="domain">
    <text evidence="1">The C-terminal RNA-binding region of CA is sufficient for all its nucleocapsid-like chaperone activities.</text>
</comment>
<comment type="miscellaneous">
    <text>Retrotransposons are mobile genetic entities that are able to replicate via an RNA intermediate and a reverse transcription step. In contrast to retroviruses, retrotransposons are non-infectious, lack an envelope and remain intracellular. Ty2 retrotransposons belong to the copia elements (pseudoviridae).</text>
</comment>
<comment type="miscellaneous">
    <molecule>Isoform Transposon Ty2-GR2 Gag polyprotein</molecule>
    <text>Produced by conventional translation.</text>
</comment>
<protein>
    <recommendedName>
        <fullName>Transposon Ty2-GR2 Gag polyprotein</fullName>
        <shortName>TY2A</shortName>
        <shortName>TYA</shortName>
        <shortName>Transposon Ty2 protein A</shortName>
    </recommendedName>
    <component>
        <recommendedName>
            <fullName>Capsid protein</fullName>
            <shortName>CA</shortName>
        </recommendedName>
    </component>
    <component>
        <recommendedName>
            <fullName>Gag-p4</fullName>
        </recommendedName>
    </component>
</protein>
<dbReference type="EMBL" id="Z72946">
    <property type="protein sequence ID" value="CAA97176.1"/>
    <property type="molecule type" value="Genomic_DNA"/>
</dbReference>
<dbReference type="EMBL" id="Z72947">
    <property type="protein sequence ID" value="CAA97185.1"/>
    <property type="molecule type" value="Genomic_DNA"/>
</dbReference>
<dbReference type="EMBL" id="BK006941">
    <property type="protein sequence ID" value="DAA08254.1"/>
    <property type="molecule type" value="Genomic_DNA"/>
</dbReference>
<dbReference type="PIR" id="S56252">
    <property type="entry name" value="S56252"/>
</dbReference>
<dbReference type="RefSeq" id="NP_058157.1">
    <molecule id="P0CX62-1"/>
    <property type="nucleotide sequence ID" value="NM_001184430.1"/>
</dbReference>
<dbReference type="RefSeq" id="NP_058164.1">
    <molecule id="P0CX62-1"/>
    <property type="nucleotide sequence ID" value="NM_001184401.1"/>
</dbReference>
<dbReference type="SMR" id="P0CX62"/>
<dbReference type="BioGRID" id="31145">
    <property type="interactions" value="1"/>
</dbReference>
<dbReference type="BioGRID" id="33409">
    <property type="interactions" value="1"/>
</dbReference>
<dbReference type="FunCoup" id="P0CX62">
    <property type="interactions" value="52"/>
</dbReference>
<dbReference type="MEROPS" id="A11.003"/>
<dbReference type="GeneID" id="853066"/>
<dbReference type="KEGG" id="sce:YFL002W-B"/>
<dbReference type="KEGG" id="sce:YGR161W-A"/>
<dbReference type="AGR" id="SGD:S000007369"/>
<dbReference type="SGD" id="S000007369">
    <property type="gene designation" value="YGR161W-A"/>
</dbReference>
<dbReference type="VEuPathDB" id="FungiDB:YFL002W-B"/>
<dbReference type="VEuPathDB" id="FungiDB:YGR161W-A"/>
<dbReference type="HOGENOM" id="CLU_045291_1_0_1"/>
<dbReference type="InParanoid" id="P0CX62"/>
<dbReference type="OrthoDB" id="4046078at2759"/>
<dbReference type="Proteomes" id="UP000002311">
    <property type="component" value="Chromosome VII"/>
</dbReference>
<dbReference type="RNAct" id="P0CX62">
    <property type="molecule type" value="protein"/>
</dbReference>
<dbReference type="GO" id="GO:0005737">
    <property type="term" value="C:cytoplasm"/>
    <property type="evidence" value="ECO:0007669"/>
    <property type="project" value="UniProtKB-SubCell"/>
</dbReference>
<dbReference type="GO" id="GO:0003723">
    <property type="term" value="F:RNA binding"/>
    <property type="evidence" value="ECO:0007669"/>
    <property type="project" value="UniProtKB-KW"/>
</dbReference>
<dbReference type="GO" id="GO:0075523">
    <property type="term" value="P:viral translational frameshifting"/>
    <property type="evidence" value="ECO:0007669"/>
    <property type="project" value="UniProtKB-KW"/>
</dbReference>
<dbReference type="InterPro" id="IPR015820">
    <property type="entry name" value="TYA"/>
</dbReference>
<dbReference type="Pfam" id="PF01021">
    <property type="entry name" value="TYA"/>
    <property type="match status" value="1"/>
</dbReference>
<reference key="1">
    <citation type="journal article" date="1997" name="Nature">
        <title>The nucleotide sequence of Saccharomyces cerevisiae chromosome VII.</title>
        <authorList>
            <person name="Tettelin H."/>
            <person name="Agostoni-Carbone M.L."/>
            <person name="Albermann K."/>
            <person name="Albers M."/>
            <person name="Arroyo J."/>
            <person name="Backes U."/>
            <person name="Barreiros T."/>
            <person name="Bertani I."/>
            <person name="Bjourson A.J."/>
            <person name="Brueckner M."/>
            <person name="Bruschi C.V."/>
            <person name="Carignani G."/>
            <person name="Castagnoli L."/>
            <person name="Cerdan E."/>
            <person name="Clemente M.L."/>
            <person name="Coblenz A."/>
            <person name="Coglievina M."/>
            <person name="Coissac E."/>
            <person name="Defoor E."/>
            <person name="Del Bino S."/>
            <person name="Delius H."/>
            <person name="Delneri D."/>
            <person name="de Wergifosse P."/>
            <person name="Dujon B."/>
            <person name="Durand P."/>
            <person name="Entian K.-D."/>
            <person name="Eraso P."/>
            <person name="Escribano V."/>
            <person name="Fabiani L."/>
            <person name="Fartmann B."/>
            <person name="Feroli F."/>
            <person name="Feuermann M."/>
            <person name="Frontali L."/>
            <person name="Garcia-Gonzalez M."/>
            <person name="Garcia-Saez M.I."/>
            <person name="Goffeau A."/>
            <person name="Guerreiro P."/>
            <person name="Hani J."/>
            <person name="Hansen M."/>
            <person name="Hebling U."/>
            <person name="Hernandez K."/>
            <person name="Heumann K."/>
            <person name="Hilger F."/>
            <person name="Hofmann B."/>
            <person name="Indge K.J."/>
            <person name="James C.M."/>
            <person name="Klima R."/>
            <person name="Koetter P."/>
            <person name="Kramer B."/>
            <person name="Kramer W."/>
            <person name="Lauquin G."/>
            <person name="Leuther H."/>
            <person name="Louis E.J."/>
            <person name="Maillier E."/>
            <person name="Marconi A."/>
            <person name="Martegani E."/>
            <person name="Mazon M.J."/>
            <person name="Mazzoni C."/>
            <person name="McReynolds A.D.K."/>
            <person name="Melchioretto P."/>
            <person name="Mewes H.-W."/>
            <person name="Minenkova O."/>
            <person name="Mueller-Auer S."/>
            <person name="Nawrocki A."/>
            <person name="Netter P."/>
            <person name="Neu R."/>
            <person name="Nombela C."/>
            <person name="Oliver S.G."/>
            <person name="Panzeri L."/>
            <person name="Paoluzi S."/>
            <person name="Plevani P."/>
            <person name="Portetelle D."/>
            <person name="Portillo F."/>
            <person name="Potier S."/>
            <person name="Purnelle B."/>
            <person name="Rieger M."/>
            <person name="Riles L."/>
            <person name="Rinaldi T."/>
            <person name="Robben J."/>
            <person name="Rodrigues-Pousada C."/>
            <person name="Rodriguez-Belmonte E."/>
            <person name="Rodriguez-Torres A.M."/>
            <person name="Rose M."/>
            <person name="Ruzzi M."/>
            <person name="Saliola M."/>
            <person name="Sanchez-Perez M."/>
            <person name="Schaefer B."/>
            <person name="Schaefer M."/>
            <person name="Scharfe M."/>
            <person name="Schmidheini T."/>
            <person name="Schreer A."/>
            <person name="Skala J."/>
            <person name="Souciet J.-L."/>
            <person name="Steensma H.Y."/>
            <person name="Talla E."/>
            <person name="Thierry A."/>
            <person name="Vandenbol M."/>
            <person name="van der Aart Q.J.M."/>
            <person name="Van Dyck L."/>
            <person name="Vanoni M."/>
            <person name="Verhasselt P."/>
            <person name="Voet M."/>
            <person name="Volckaert G."/>
            <person name="Wambutt R."/>
            <person name="Watson M.D."/>
            <person name="Weber N."/>
            <person name="Wedler E."/>
            <person name="Wedler H."/>
            <person name="Wipfli P."/>
            <person name="Wolf K."/>
            <person name="Wright L.F."/>
            <person name="Zaccaria P."/>
            <person name="Zimmermann M."/>
            <person name="Zollner A."/>
            <person name="Kleine K."/>
        </authorList>
    </citation>
    <scope>NUCLEOTIDE SEQUENCE [LARGE SCALE GENOMIC DNA]</scope>
    <source>
        <strain>ATCC 204508 / S288c</strain>
    </source>
</reference>
<reference key="2">
    <citation type="journal article" date="2014" name="G3 (Bethesda)">
        <title>The reference genome sequence of Saccharomyces cerevisiae: Then and now.</title>
        <authorList>
            <person name="Engel S.R."/>
            <person name="Dietrich F.S."/>
            <person name="Fisk D.G."/>
            <person name="Binkley G."/>
            <person name="Balakrishnan R."/>
            <person name="Costanzo M.C."/>
            <person name="Dwight S.S."/>
            <person name="Hitz B.C."/>
            <person name="Karra K."/>
            <person name="Nash R.S."/>
            <person name="Weng S."/>
            <person name="Wong E.D."/>
            <person name="Lloyd P."/>
            <person name="Skrzypek M.S."/>
            <person name="Miyasato S.R."/>
            <person name="Simison M."/>
            <person name="Cherry J.M."/>
        </authorList>
    </citation>
    <scope>GENOME REANNOTATION</scope>
    <source>
        <strain>ATCC 204508 / S288c</strain>
    </source>
</reference>
<reference key="3">
    <citation type="journal article" date="1998" name="Genome Res.">
        <title>Transposable elements and genome organization: a comprehensive survey of retrotransposons revealed by the complete Saccharomyces cerevisiae genome sequence.</title>
        <authorList>
            <person name="Kim J.M."/>
            <person name="Vanguri S."/>
            <person name="Boeke J.D."/>
            <person name="Gabriel A."/>
            <person name="Voytas D.F."/>
        </authorList>
    </citation>
    <scope>NOMENCLATURE</scope>
</reference>
<reference key="4">
    <citation type="journal article" date="2005" name="Cytogenet. Genome Res.">
        <title>Happy together: the life and times of Ty retrotransposons and their hosts.</title>
        <authorList>
            <person name="Lesage P."/>
            <person name="Todeschini A.L."/>
        </authorList>
    </citation>
    <scope>REVIEW</scope>
</reference>
<proteinExistence type="inferred from homology"/>
<sequence length="438" mass="49762">MESQQLHQNPHSLHGSAYASVTSKEVPSNQDPLAVSASNLPEFDRDSTKVNSQQETTPGTSAVPENHHHVSPQPASVPPPQNGQYQQHGMMTPNKAMASNWAHYQQPSMMTCSHYQTSPAYYQPDPHYPLPQYIPPLSTSSPDPIDSQNQHSEVPQAETKVRNNVLPPHTLTSEENFSTWVKFYIRFLKNSNLGDIIPNDQGEIKSQMTYEEHAYIYNTFQAFAPFHLLPTWVKQILEINYADILTVLCKSVSKMQTNNQELKDWIALANLEYDGSTSADTFEITVSTIIQRLKENNINVSDRLACQLILKGLSGDFKYLRNQYRTKTNMKLSQLFAEIQLIYDENKIMNLNKPSQYKQHSEYKNVSRTSPNTTNTKVTTRNYHRTNSSKPRAAKAHNIATSSKFSRVNNDHINESTVSSQYLSDDNELSLRPATERI</sequence>
<accession>P0CX62</accession>
<accession>D6VTM8</accession>
<accession>Q99195</accession>
<gene>
    <name type="primary">TY2A-GR2</name>
    <name type="synonym">YGRWTy2-2 GAG</name>
    <name type="ordered locus">YGR161W-A</name>
    <name type="ORF">G7015</name>
</gene>
<feature type="chain" id="PRO_0000409814" description="Transposon Ty2-GR2 Gag polyprotein">
    <location>
        <begin position="1"/>
        <end position="438"/>
    </location>
</feature>
<feature type="chain" id="PRO_0000409815" description="Capsid protein" evidence="1">
    <location>
        <begin position="1"/>
        <end position="397"/>
    </location>
</feature>
<feature type="peptide" id="PRO_0000409816" description="Gag-p4" evidence="1">
    <location>
        <begin position="398"/>
        <end position="438"/>
    </location>
</feature>
<feature type="region of interest" description="Disordered" evidence="2">
    <location>
        <begin position="1"/>
        <end position="86"/>
    </location>
</feature>
<feature type="region of interest" description="RNA-binding" evidence="1">
    <location>
        <begin position="295"/>
        <end position="397"/>
    </location>
</feature>
<feature type="region of interest" description="Disordered" evidence="2">
    <location>
        <begin position="366"/>
        <end position="397"/>
    </location>
</feature>
<feature type="region of interest" description="Disordered" evidence="2">
    <location>
        <begin position="419"/>
        <end position="438"/>
    </location>
</feature>
<feature type="compositionally biased region" description="Polar residues" evidence="2">
    <location>
        <begin position="1"/>
        <end position="11"/>
    </location>
</feature>
<feature type="compositionally biased region" description="Polar residues" evidence="2">
    <location>
        <begin position="19"/>
        <end position="39"/>
    </location>
</feature>
<feature type="compositionally biased region" description="Polar residues" evidence="2">
    <location>
        <begin position="49"/>
        <end position="60"/>
    </location>
</feature>
<feature type="compositionally biased region" description="Low complexity" evidence="2">
    <location>
        <begin position="369"/>
        <end position="381"/>
    </location>
</feature>
<feature type="site" description="Cleavage; by Ty2 protease" evidence="1">
    <location>
        <begin position="397"/>
        <end position="398"/>
    </location>
</feature>
<evidence type="ECO:0000250" key="1"/>
<evidence type="ECO:0000256" key="2">
    <source>
        <dbReference type="SAM" id="MobiDB-lite"/>
    </source>
</evidence>
<name>YG22A_YEAST</name>